<reference key="1">
    <citation type="journal article" date="2005" name="Nucleic Acids Res.">
        <title>Genome dynamics and diversity of Shigella species, the etiologic agents of bacillary dysentery.</title>
        <authorList>
            <person name="Yang F."/>
            <person name="Yang J."/>
            <person name="Zhang X."/>
            <person name="Chen L."/>
            <person name="Jiang Y."/>
            <person name="Yan Y."/>
            <person name="Tang X."/>
            <person name="Wang J."/>
            <person name="Xiong Z."/>
            <person name="Dong J."/>
            <person name="Xue Y."/>
            <person name="Zhu Y."/>
            <person name="Xu X."/>
            <person name="Sun L."/>
            <person name="Chen S."/>
            <person name="Nie H."/>
            <person name="Peng J."/>
            <person name="Xu J."/>
            <person name="Wang Y."/>
            <person name="Yuan Z."/>
            <person name="Wen Y."/>
            <person name="Yao Z."/>
            <person name="Shen Y."/>
            <person name="Qiang B."/>
            <person name="Hou Y."/>
            <person name="Yu J."/>
            <person name="Jin Q."/>
        </authorList>
    </citation>
    <scope>NUCLEOTIDE SEQUENCE [LARGE SCALE GENOMIC DNA]</scope>
    <source>
        <strain>Sb227</strain>
    </source>
</reference>
<feature type="chain" id="PRO_0000271869" description="Protein nucleotidyltransferase YdiU">
    <location>
        <begin position="1"/>
        <end position="478"/>
    </location>
</feature>
<feature type="active site" description="Proton acceptor" evidence="1">
    <location>
        <position position="246"/>
    </location>
</feature>
<feature type="binding site" evidence="1">
    <location>
        <position position="84"/>
    </location>
    <ligand>
        <name>ATP</name>
        <dbReference type="ChEBI" id="CHEBI:30616"/>
    </ligand>
</feature>
<feature type="binding site" evidence="1">
    <location>
        <position position="86"/>
    </location>
    <ligand>
        <name>ATP</name>
        <dbReference type="ChEBI" id="CHEBI:30616"/>
    </ligand>
</feature>
<feature type="binding site" evidence="1">
    <location>
        <position position="87"/>
    </location>
    <ligand>
        <name>ATP</name>
        <dbReference type="ChEBI" id="CHEBI:30616"/>
    </ligand>
</feature>
<feature type="binding site" evidence="1">
    <location>
        <position position="107"/>
    </location>
    <ligand>
        <name>ATP</name>
        <dbReference type="ChEBI" id="CHEBI:30616"/>
    </ligand>
</feature>
<feature type="binding site" evidence="1">
    <location>
        <position position="119"/>
    </location>
    <ligand>
        <name>ATP</name>
        <dbReference type="ChEBI" id="CHEBI:30616"/>
    </ligand>
</feature>
<feature type="binding site" evidence="1">
    <location>
        <position position="120"/>
    </location>
    <ligand>
        <name>ATP</name>
        <dbReference type="ChEBI" id="CHEBI:30616"/>
    </ligand>
</feature>
<feature type="binding site" evidence="1">
    <location>
        <position position="170"/>
    </location>
    <ligand>
        <name>ATP</name>
        <dbReference type="ChEBI" id="CHEBI:30616"/>
    </ligand>
</feature>
<feature type="binding site" evidence="1">
    <location>
        <position position="177"/>
    </location>
    <ligand>
        <name>ATP</name>
        <dbReference type="ChEBI" id="CHEBI:30616"/>
    </ligand>
</feature>
<feature type="binding site" evidence="1">
    <location>
        <position position="247"/>
    </location>
    <ligand>
        <name>Mg(2+)</name>
        <dbReference type="ChEBI" id="CHEBI:18420"/>
    </ligand>
</feature>
<feature type="binding site" evidence="1">
    <location>
        <position position="256"/>
    </location>
    <ligand>
        <name>ATP</name>
        <dbReference type="ChEBI" id="CHEBI:30616"/>
    </ligand>
</feature>
<feature type="binding site" evidence="1">
    <location>
        <position position="256"/>
    </location>
    <ligand>
        <name>Mg(2+)</name>
        <dbReference type="ChEBI" id="CHEBI:18420"/>
    </ligand>
</feature>
<name>SELO_SHIBS</name>
<accession>Q321G3</accession>
<dbReference type="EC" id="2.7.7.-" evidence="1"/>
<dbReference type="EC" id="2.7.7.108" evidence="1"/>
<dbReference type="EMBL" id="CP000036">
    <property type="protein sequence ID" value="ABB66045.1"/>
    <property type="molecule type" value="Genomic_DNA"/>
</dbReference>
<dbReference type="RefSeq" id="WP_000175693.1">
    <property type="nucleotide sequence ID" value="NC_007613.1"/>
</dbReference>
<dbReference type="SMR" id="Q321G3"/>
<dbReference type="KEGG" id="sbo:SBO_1422"/>
<dbReference type="HOGENOM" id="CLU_010245_4_0_6"/>
<dbReference type="Proteomes" id="UP000007067">
    <property type="component" value="Chromosome"/>
</dbReference>
<dbReference type="GO" id="GO:0070733">
    <property type="term" value="F:AMPylase activity"/>
    <property type="evidence" value="ECO:0007669"/>
    <property type="project" value="RHEA"/>
</dbReference>
<dbReference type="GO" id="GO:0005524">
    <property type="term" value="F:ATP binding"/>
    <property type="evidence" value="ECO:0007669"/>
    <property type="project" value="UniProtKB-UniRule"/>
</dbReference>
<dbReference type="GO" id="GO:0000287">
    <property type="term" value="F:magnesium ion binding"/>
    <property type="evidence" value="ECO:0007669"/>
    <property type="project" value="UniProtKB-UniRule"/>
</dbReference>
<dbReference type="HAMAP" id="MF_00692">
    <property type="entry name" value="YdiU_SelO"/>
    <property type="match status" value="1"/>
</dbReference>
<dbReference type="InterPro" id="IPR054838">
    <property type="entry name" value="adnlytase_SelO"/>
</dbReference>
<dbReference type="InterPro" id="IPR003846">
    <property type="entry name" value="SelO"/>
</dbReference>
<dbReference type="NCBIfam" id="NF040880">
    <property type="entry name" value="adnlytase_SelO"/>
    <property type="match status" value="1"/>
</dbReference>
<dbReference type="NCBIfam" id="NF000658">
    <property type="entry name" value="PRK00029.1"/>
    <property type="match status" value="1"/>
</dbReference>
<dbReference type="PANTHER" id="PTHR32057">
    <property type="entry name" value="PROTEIN ADENYLYLTRANSFERASE SELO, MITOCHONDRIAL"/>
    <property type="match status" value="1"/>
</dbReference>
<dbReference type="PANTHER" id="PTHR32057:SF14">
    <property type="entry name" value="PROTEIN ADENYLYLTRANSFERASE SELO, MITOCHONDRIAL"/>
    <property type="match status" value="1"/>
</dbReference>
<dbReference type="Pfam" id="PF02696">
    <property type="entry name" value="SelO"/>
    <property type="match status" value="1"/>
</dbReference>
<gene>
    <name evidence="1" type="primary">ydiU</name>
    <name evidence="1" type="synonym">selO</name>
    <name type="ordered locus">SBO_1422</name>
</gene>
<protein>
    <recommendedName>
        <fullName evidence="1">Protein nucleotidyltransferase YdiU</fullName>
        <ecNumber evidence="1">2.7.7.-</ecNumber>
    </recommendedName>
    <alternativeName>
        <fullName evidence="1">Protein adenylyltransferase YdiU</fullName>
        <ecNumber evidence="1">2.7.7.108</ecNumber>
    </alternativeName>
    <alternativeName>
        <fullName evidence="1">Protein uridylyltransferase YdiU</fullName>
        <ecNumber evidence="1">2.7.7.-</ecNumber>
    </alternativeName>
</protein>
<evidence type="ECO:0000255" key="1">
    <source>
        <dbReference type="HAMAP-Rule" id="MF_00692"/>
    </source>
</evidence>
<organism>
    <name type="scientific">Shigella boydii serotype 4 (strain Sb227)</name>
    <dbReference type="NCBI Taxonomy" id="300268"/>
    <lineage>
        <taxon>Bacteria</taxon>
        <taxon>Pseudomonadati</taxon>
        <taxon>Pseudomonadota</taxon>
        <taxon>Gammaproteobacteria</taxon>
        <taxon>Enterobacterales</taxon>
        <taxon>Enterobacteriaceae</taxon>
        <taxon>Shigella</taxon>
    </lineage>
</organism>
<sequence length="478" mass="54463">MTLSFVTRWRDELPETYTALSPTPLNNARLIWHNIELANTLSIPSSLFKNGAGVWGGEALLPGMSPLAQVYSGHQFGVWAGQLGDGRGILLGEQLLADGTTMDWHLKGAGLTPYSRMGDGRAVLRSTIRESLASEAMHYLGIPTTRALSIVTSDSPVYRETAEPGAMLMRVAPSHLRFGHFEHFYYRRESEKVRQLADFAIRHYWSHLEDDEDKYRLWFSDVVARTASLIAQWQTVGFAHGVMNTDNMSLLGLTLDYGPFGFLDDYEPGFICNHSDHQGRYSFDNQPAVALWNLQRLAQTLSPFVAVDALNEALDSYQQVLLTHYGQRMRQKLGFMTEQKEDNALLNELFSLMARERSDYTRTFRMLSLTEQHSAASPLRDEFIDRAAFDDWFARYRGRLQQDEVSDSERQQLIQSVNPALVLRNWLAQRAIEAAEKGDMMELHRLHEALRNPFSDRDDDYVSRPPDWGKRLEVSCSS</sequence>
<comment type="function">
    <text evidence="1">Nucleotidyltransferase involved in the post-translational modification of proteins. It can catalyze the addition of adenosine monophosphate (AMP) or uridine monophosphate (UMP) to a protein, resulting in modifications known as AMPylation and UMPylation.</text>
</comment>
<comment type="catalytic activity">
    <reaction evidence="1">
        <text>L-seryl-[protein] + ATP = 3-O-(5'-adenylyl)-L-seryl-[protein] + diphosphate</text>
        <dbReference type="Rhea" id="RHEA:58120"/>
        <dbReference type="Rhea" id="RHEA-COMP:9863"/>
        <dbReference type="Rhea" id="RHEA-COMP:15073"/>
        <dbReference type="ChEBI" id="CHEBI:29999"/>
        <dbReference type="ChEBI" id="CHEBI:30616"/>
        <dbReference type="ChEBI" id="CHEBI:33019"/>
        <dbReference type="ChEBI" id="CHEBI:142516"/>
        <dbReference type="EC" id="2.7.7.108"/>
    </reaction>
</comment>
<comment type="catalytic activity">
    <reaction evidence="1">
        <text>L-threonyl-[protein] + ATP = 3-O-(5'-adenylyl)-L-threonyl-[protein] + diphosphate</text>
        <dbReference type="Rhea" id="RHEA:54292"/>
        <dbReference type="Rhea" id="RHEA-COMP:11060"/>
        <dbReference type="Rhea" id="RHEA-COMP:13847"/>
        <dbReference type="ChEBI" id="CHEBI:30013"/>
        <dbReference type="ChEBI" id="CHEBI:30616"/>
        <dbReference type="ChEBI" id="CHEBI:33019"/>
        <dbReference type="ChEBI" id="CHEBI:138113"/>
        <dbReference type="EC" id="2.7.7.108"/>
    </reaction>
</comment>
<comment type="catalytic activity">
    <reaction evidence="1">
        <text>L-tyrosyl-[protein] + ATP = O-(5'-adenylyl)-L-tyrosyl-[protein] + diphosphate</text>
        <dbReference type="Rhea" id="RHEA:54288"/>
        <dbReference type="Rhea" id="RHEA-COMP:10136"/>
        <dbReference type="Rhea" id="RHEA-COMP:13846"/>
        <dbReference type="ChEBI" id="CHEBI:30616"/>
        <dbReference type="ChEBI" id="CHEBI:33019"/>
        <dbReference type="ChEBI" id="CHEBI:46858"/>
        <dbReference type="ChEBI" id="CHEBI:83624"/>
        <dbReference type="EC" id="2.7.7.108"/>
    </reaction>
</comment>
<comment type="catalytic activity">
    <reaction evidence="1">
        <text>L-histidyl-[protein] + UTP = N(tele)-(5'-uridylyl)-L-histidyl-[protein] + diphosphate</text>
        <dbReference type="Rhea" id="RHEA:83891"/>
        <dbReference type="Rhea" id="RHEA-COMP:9745"/>
        <dbReference type="Rhea" id="RHEA-COMP:20239"/>
        <dbReference type="ChEBI" id="CHEBI:29979"/>
        <dbReference type="ChEBI" id="CHEBI:33019"/>
        <dbReference type="ChEBI" id="CHEBI:46398"/>
        <dbReference type="ChEBI" id="CHEBI:233474"/>
    </reaction>
</comment>
<comment type="catalytic activity">
    <reaction evidence="1">
        <text>L-seryl-[protein] + UTP = O-(5'-uridylyl)-L-seryl-[protein] + diphosphate</text>
        <dbReference type="Rhea" id="RHEA:64604"/>
        <dbReference type="Rhea" id="RHEA-COMP:9863"/>
        <dbReference type="Rhea" id="RHEA-COMP:16635"/>
        <dbReference type="ChEBI" id="CHEBI:29999"/>
        <dbReference type="ChEBI" id="CHEBI:33019"/>
        <dbReference type="ChEBI" id="CHEBI:46398"/>
        <dbReference type="ChEBI" id="CHEBI:156051"/>
    </reaction>
</comment>
<comment type="catalytic activity">
    <reaction evidence="1">
        <text>L-tyrosyl-[protein] + UTP = O-(5'-uridylyl)-L-tyrosyl-[protein] + diphosphate</text>
        <dbReference type="Rhea" id="RHEA:83887"/>
        <dbReference type="Rhea" id="RHEA-COMP:10136"/>
        <dbReference type="Rhea" id="RHEA-COMP:20238"/>
        <dbReference type="ChEBI" id="CHEBI:33019"/>
        <dbReference type="ChEBI" id="CHEBI:46398"/>
        <dbReference type="ChEBI" id="CHEBI:46858"/>
        <dbReference type="ChEBI" id="CHEBI:90602"/>
    </reaction>
</comment>
<comment type="cofactor">
    <cofactor evidence="1">
        <name>Mg(2+)</name>
        <dbReference type="ChEBI" id="CHEBI:18420"/>
    </cofactor>
    <cofactor evidence="1">
        <name>Mn(2+)</name>
        <dbReference type="ChEBI" id="CHEBI:29035"/>
    </cofactor>
</comment>
<comment type="similarity">
    <text evidence="1">Belongs to the SELO family.</text>
</comment>
<keyword id="KW-0067">ATP-binding</keyword>
<keyword id="KW-0460">Magnesium</keyword>
<keyword id="KW-0464">Manganese</keyword>
<keyword id="KW-0479">Metal-binding</keyword>
<keyword id="KW-0547">Nucleotide-binding</keyword>
<keyword id="KW-0548">Nucleotidyltransferase</keyword>
<keyword id="KW-0808">Transferase</keyword>
<proteinExistence type="inferred from homology"/>